<reference key="1">
    <citation type="journal article" date="2004" name="Proc. Natl. Acad. Sci. U.S.A.">
        <title>The louse-borne human pathogen Bartonella quintana is a genomic derivative of the zoonotic agent Bartonella henselae.</title>
        <authorList>
            <person name="Alsmark U.C.M."/>
            <person name="Frank A.C."/>
            <person name="Karlberg E.O."/>
            <person name="Legault B.-A."/>
            <person name="Ardell D.H."/>
            <person name="Canbaeck B."/>
            <person name="Eriksson A.-S."/>
            <person name="Naeslund A.K."/>
            <person name="Handley S.A."/>
            <person name="Huvet M."/>
            <person name="La Scola B."/>
            <person name="Holmberg M."/>
            <person name="Andersson S.G.E."/>
        </authorList>
    </citation>
    <scope>NUCLEOTIDE SEQUENCE [LARGE SCALE GENOMIC DNA]</scope>
    <source>
        <strain>Toulouse</strain>
    </source>
</reference>
<feature type="chain" id="PRO_0000102623" description="Ribosome-binding factor A">
    <location>
        <begin position="1"/>
        <end position="135"/>
    </location>
</feature>
<organism>
    <name type="scientific">Bartonella quintana (strain Toulouse)</name>
    <name type="common">Rochalimaea quintana</name>
    <dbReference type="NCBI Taxonomy" id="283165"/>
    <lineage>
        <taxon>Bacteria</taxon>
        <taxon>Pseudomonadati</taxon>
        <taxon>Pseudomonadota</taxon>
        <taxon>Alphaproteobacteria</taxon>
        <taxon>Hyphomicrobiales</taxon>
        <taxon>Bartonellaceae</taxon>
        <taxon>Bartonella</taxon>
    </lineage>
</organism>
<keyword id="KW-0963">Cytoplasm</keyword>
<keyword id="KW-0690">Ribosome biogenesis</keyword>
<gene>
    <name evidence="1" type="primary">rbfA</name>
    <name type="ordered locus">BQ02020</name>
</gene>
<dbReference type="EMBL" id="BX897700">
    <property type="protein sequence ID" value="CAF25705.1"/>
    <property type="molecule type" value="Genomic_DNA"/>
</dbReference>
<dbReference type="SMR" id="Q6G0P3"/>
<dbReference type="KEGG" id="bqu:BQ02020"/>
<dbReference type="eggNOG" id="COG0858">
    <property type="taxonomic scope" value="Bacteria"/>
</dbReference>
<dbReference type="HOGENOM" id="CLU_089475_1_0_5"/>
<dbReference type="OrthoDB" id="9805051at2"/>
<dbReference type="Proteomes" id="UP000000597">
    <property type="component" value="Chromosome"/>
</dbReference>
<dbReference type="GO" id="GO:0005829">
    <property type="term" value="C:cytosol"/>
    <property type="evidence" value="ECO:0007669"/>
    <property type="project" value="TreeGrafter"/>
</dbReference>
<dbReference type="GO" id="GO:0043024">
    <property type="term" value="F:ribosomal small subunit binding"/>
    <property type="evidence" value="ECO:0007669"/>
    <property type="project" value="TreeGrafter"/>
</dbReference>
<dbReference type="GO" id="GO:0030490">
    <property type="term" value="P:maturation of SSU-rRNA"/>
    <property type="evidence" value="ECO:0007669"/>
    <property type="project" value="UniProtKB-UniRule"/>
</dbReference>
<dbReference type="Gene3D" id="3.30.300.20">
    <property type="match status" value="1"/>
</dbReference>
<dbReference type="HAMAP" id="MF_00003">
    <property type="entry name" value="RbfA"/>
    <property type="match status" value="1"/>
</dbReference>
<dbReference type="InterPro" id="IPR015946">
    <property type="entry name" value="KH_dom-like_a/b"/>
</dbReference>
<dbReference type="InterPro" id="IPR000238">
    <property type="entry name" value="RbfA"/>
</dbReference>
<dbReference type="InterPro" id="IPR023799">
    <property type="entry name" value="RbfA_dom_sf"/>
</dbReference>
<dbReference type="InterPro" id="IPR020053">
    <property type="entry name" value="Ribosome-bd_factorA_CS"/>
</dbReference>
<dbReference type="NCBIfam" id="NF001802">
    <property type="entry name" value="PRK00521.2-5"/>
    <property type="match status" value="1"/>
</dbReference>
<dbReference type="NCBIfam" id="TIGR00082">
    <property type="entry name" value="rbfA"/>
    <property type="match status" value="1"/>
</dbReference>
<dbReference type="PANTHER" id="PTHR33515">
    <property type="entry name" value="RIBOSOME-BINDING FACTOR A, CHLOROPLASTIC-RELATED"/>
    <property type="match status" value="1"/>
</dbReference>
<dbReference type="PANTHER" id="PTHR33515:SF1">
    <property type="entry name" value="RIBOSOME-BINDING FACTOR A, CHLOROPLASTIC-RELATED"/>
    <property type="match status" value="1"/>
</dbReference>
<dbReference type="Pfam" id="PF02033">
    <property type="entry name" value="RBFA"/>
    <property type="match status" value="1"/>
</dbReference>
<dbReference type="SUPFAM" id="SSF89919">
    <property type="entry name" value="Ribosome-binding factor A, RbfA"/>
    <property type="match status" value="1"/>
</dbReference>
<dbReference type="PROSITE" id="PS01319">
    <property type="entry name" value="RBFA"/>
    <property type="match status" value="1"/>
</dbReference>
<evidence type="ECO:0000255" key="1">
    <source>
        <dbReference type="HAMAP-Rule" id="MF_00003"/>
    </source>
</evidence>
<protein>
    <recommendedName>
        <fullName evidence="1">Ribosome-binding factor A</fullName>
    </recommendedName>
</protein>
<sequence length="135" mass="15596">MKNAGPSQRQLRVGEQVRHAVAYKLQQGILLDDLLKNIVISVAEVRMSPDLKIATCFVSSLSTLHNVSPTDVVNVLNKHSRFIRREISYSLRQMKYMPELRFRLDTSFDNFSKIDSLLRSPEVARDLHHNDEFKD</sequence>
<proteinExistence type="inferred from homology"/>
<comment type="function">
    <text evidence="1">One of several proteins that assist in the late maturation steps of the functional core of the 30S ribosomal subunit. Associates with free 30S ribosomal subunits (but not with 30S subunits that are part of 70S ribosomes or polysomes). Required for efficient processing of 16S rRNA. May interact with the 5'-terminal helix region of 16S rRNA.</text>
</comment>
<comment type="subunit">
    <text evidence="1">Monomer. Binds 30S ribosomal subunits, but not 50S ribosomal subunits or 70S ribosomes.</text>
</comment>
<comment type="subcellular location">
    <subcellularLocation>
        <location evidence="1">Cytoplasm</location>
    </subcellularLocation>
</comment>
<comment type="similarity">
    <text evidence="1">Belongs to the RbfA family.</text>
</comment>
<accession>Q6G0P3</accession>
<name>RBFA_BARQU</name>